<keyword id="KW-0002">3D-structure</keyword>
<keyword id="KW-0007">Acetylation</keyword>
<keyword id="KW-0903">Direct protein sequencing</keyword>
<keyword id="KW-1185">Reference proteome</keyword>
<keyword id="KW-0687">Ribonucleoprotein</keyword>
<keyword id="KW-0689">Ribosomal protein</keyword>
<comment type="function">
    <text evidence="2">Negatively regulates lifespan.</text>
</comment>
<comment type="similarity">
    <text evidence="1">Belongs to the universal ribosomal protein uS19 family.</text>
</comment>
<evidence type="ECO:0000255" key="1"/>
<evidence type="ECO:0000269" key="2">
    <source>
    </source>
</evidence>
<evidence type="ECO:0000269" key="3">
    <source ref="2"/>
</evidence>
<evidence type="ECO:0000305" key="4"/>
<evidence type="ECO:0000312" key="5">
    <source>
        <dbReference type="EMBL" id="CAB03065.1"/>
    </source>
</evidence>
<organism>
    <name type="scientific">Caenorhabditis elegans</name>
    <dbReference type="NCBI Taxonomy" id="6239"/>
    <lineage>
        <taxon>Eukaryota</taxon>
        <taxon>Metazoa</taxon>
        <taxon>Ecdysozoa</taxon>
        <taxon>Nematoda</taxon>
        <taxon>Chromadorea</taxon>
        <taxon>Rhabditida</taxon>
        <taxon>Rhabditina</taxon>
        <taxon>Rhabditomorpha</taxon>
        <taxon>Rhabditoidea</taxon>
        <taxon>Rhabditidae</taxon>
        <taxon>Peloderinae</taxon>
        <taxon>Caenorhabditis</taxon>
    </lineage>
</organism>
<reference key="1">
    <citation type="journal article" date="1998" name="Science">
        <title>Genome sequence of the nematode C. elegans: a platform for investigating biology.</title>
        <authorList>
            <consortium name="The C. elegans sequencing consortium"/>
        </authorList>
    </citation>
    <scope>NUCLEOTIDE SEQUENCE [LARGE SCALE GENOMIC DNA]</scope>
    <source>
        <strain>Bristol N2</strain>
    </source>
</reference>
<reference key="2">
    <citation type="submission" date="2005-09" db="UniProtKB">
        <authorList>
            <person name="Bienvenut W.V."/>
        </authorList>
    </citation>
    <scope>PROTEIN SEQUENCE OF 2-13; 25-36; 59-65; 72-83 AND 88-106</scope>
    <scope>ACETYLATION AT ALA-2</scope>
    <scope>IDENTIFICATION BY MASS SPECTROMETRY</scope>
</reference>
<reference key="3">
    <citation type="journal article" date="2013" name="Aging Cell">
        <title>Heat shock factor 1 mediates the longevity conferred by inhibition of TOR and insulin/IGF-1 signaling pathways in C. elegans.</title>
        <authorList>
            <person name="Seo K."/>
            <person name="Choi E."/>
            <person name="Lee D."/>
            <person name="Jeong D.E."/>
            <person name="Jang S.K."/>
            <person name="Lee S.J."/>
        </authorList>
    </citation>
    <scope>FUNCTION</scope>
</reference>
<accession>Q9XVP0</accession>
<proteinExistence type="evidence at protein level"/>
<dbReference type="EMBL" id="Z81077">
    <property type="protein sequence ID" value="CAB03065.1"/>
    <property type="molecule type" value="Genomic_DNA"/>
</dbReference>
<dbReference type="PIR" id="T21828">
    <property type="entry name" value="T21828"/>
</dbReference>
<dbReference type="RefSeq" id="NP_492384.1">
    <property type="nucleotide sequence ID" value="NM_059983.8"/>
</dbReference>
<dbReference type="PDB" id="9BH5">
    <property type="method" value="EM"/>
    <property type="resolution" value="2.63 A"/>
    <property type="chains" value="AP=1-151"/>
</dbReference>
<dbReference type="PDB" id="9CAI">
    <property type="method" value="EM"/>
    <property type="resolution" value="2.59 A"/>
    <property type="chains" value="AP=1-151"/>
</dbReference>
<dbReference type="PDBsum" id="9BH5"/>
<dbReference type="PDBsum" id="9CAI"/>
<dbReference type="EMDB" id="EMD-44533"/>
<dbReference type="EMDB" id="EMD-45392"/>
<dbReference type="SMR" id="Q9XVP0"/>
<dbReference type="BioGRID" id="38126">
    <property type="interactions" value="111"/>
</dbReference>
<dbReference type="FunCoup" id="Q9XVP0">
    <property type="interactions" value="1881"/>
</dbReference>
<dbReference type="IntAct" id="Q9XVP0">
    <property type="interactions" value="11"/>
</dbReference>
<dbReference type="STRING" id="6239.F36A2.6.1"/>
<dbReference type="iPTMnet" id="Q9XVP0"/>
<dbReference type="PaxDb" id="6239-F36A2.6.1"/>
<dbReference type="PeptideAtlas" id="Q9XVP0"/>
<dbReference type="EnsemblMetazoa" id="F36A2.6.1">
    <property type="protein sequence ID" value="F36A2.6.1"/>
    <property type="gene ID" value="WBGene00004484"/>
</dbReference>
<dbReference type="GeneID" id="172693"/>
<dbReference type="KEGG" id="cel:CELE_F36A2.6"/>
<dbReference type="UCSC" id="F36A2.6.2">
    <property type="organism name" value="c. elegans"/>
</dbReference>
<dbReference type="AGR" id="WB:WBGene00004484"/>
<dbReference type="CTD" id="172693"/>
<dbReference type="WormBase" id="F36A2.6">
    <property type="protein sequence ID" value="CE09945"/>
    <property type="gene ID" value="WBGene00004484"/>
    <property type="gene designation" value="rps-15"/>
</dbReference>
<dbReference type="eggNOG" id="KOG0898">
    <property type="taxonomic scope" value="Eukaryota"/>
</dbReference>
<dbReference type="GeneTree" id="ENSGT00390000000475"/>
<dbReference type="HOGENOM" id="CLU_097347_1_0_1"/>
<dbReference type="InParanoid" id="Q9XVP0"/>
<dbReference type="OMA" id="KTHCRDM"/>
<dbReference type="OrthoDB" id="10258210at2759"/>
<dbReference type="PhylomeDB" id="Q9XVP0"/>
<dbReference type="Reactome" id="R-CEL-156827">
    <property type="pathway name" value="L13a-mediated translational silencing of Ceruloplasmin expression"/>
</dbReference>
<dbReference type="Reactome" id="R-CEL-1799339">
    <property type="pathway name" value="SRP-dependent cotranslational protein targeting to membrane"/>
</dbReference>
<dbReference type="Reactome" id="R-CEL-72649">
    <property type="pathway name" value="Translation initiation complex formation"/>
</dbReference>
<dbReference type="Reactome" id="R-CEL-72689">
    <property type="pathway name" value="Formation of a pool of free 40S subunits"/>
</dbReference>
<dbReference type="Reactome" id="R-CEL-72695">
    <property type="pathway name" value="Formation of the ternary complex, and subsequently, the 43S complex"/>
</dbReference>
<dbReference type="Reactome" id="R-CEL-72702">
    <property type="pathway name" value="Ribosomal scanning and start codon recognition"/>
</dbReference>
<dbReference type="Reactome" id="R-CEL-72706">
    <property type="pathway name" value="GTP hydrolysis and joining of the 60S ribosomal subunit"/>
</dbReference>
<dbReference type="Reactome" id="R-CEL-975956">
    <property type="pathway name" value="Nonsense Mediated Decay (NMD) independent of the Exon Junction Complex (EJC)"/>
</dbReference>
<dbReference type="Reactome" id="R-CEL-975957">
    <property type="pathway name" value="Nonsense Mediated Decay (NMD) enhanced by the Exon Junction Complex (EJC)"/>
</dbReference>
<dbReference type="SignaLink" id="Q9XVP0"/>
<dbReference type="PRO" id="PR:Q9XVP0"/>
<dbReference type="Proteomes" id="UP000001940">
    <property type="component" value="Chromosome I"/>
</dbReference>
<dbReference type="Bgee" id="WBGene00004484">
    <property type="expression patterns" value="Expressed in pharyngeal muscle cell (C elegans) and 4 other cell types or tissues"/>
</dbReference>
<dbReference type="GO" id="GO:0022627">
    <property type="term" value="C:cytosolic small ribosomal subunit"/>
    <property type="evidence" value="ECO:0000318"/>
    <property type="project" value="GO_Central"/>
</dbReference>
<dbReference type="GO" id="GO:0003723">
    <property type="term" value="F:RNA binding"/>
    <property type="evidence" value="ECO:0007669"/>
    <property type="project" value="InterPro"/>
</dbReference>
<dbReference type="GO" id="GO:0003735">
    <property type="term" value="F:structural constituent of ribosome"/>
    <property type="evidence" value="ECO:0000318"/>
    <property type="project" value="GO_Central"/>
</dbReference>
<dbReference type="GO" id="GO:0008340">
    <property type="term" value="P:determination of adult lifespan"/>
    <property type="evidence" value="ECO:0000315"/>
    <property type="project" value="WormBase"/>
</dbReference>
<dbReference type="GO" id="GO:0000028">
    <property type="term" value="P:ribosomal small subunit assembly"/>
    <property type="evidence" value="ECO:0000318"/>
    <property type="project" value="GO_Central"/>
</dbReference>
<dbReference type="GO" id="GO:0006412">
    <property type="term" value="P:translation"/>
    <property type="evidence" value="ECO:0007669"/>
    <property type="project" value="InterPro"/>
</dbReference>
<dbReference type="FunFam" id="3.30.860.10:FF:000002">
    <property type="entry name" value="40S ribosomal protein S15"/>
    <property type="match status" value="1"/>
</dbReference>
<dbReference type="Gene3D" id="3.30.860.10">
    <property type="entry name" value="30s Ribosomal Protein S19, Chain A"/>
    <property type="match status" value="1"/>
</dbReference>
<dbReference type="HAMAP" id="MF_00531">
    <property type="entry name" value="Ribosomal_uS19"/>
    <property type="match status" value="1"/>
</dbReference>
<dbReference type="InterPro" id="IPR002222">
    <property type="entry name" value="Ribosomal_uS19"/>
</dbReference>
<dbReference type="InterPro" id="IPR020934">
    <property type="entry name" value="Ribosomal_uS19_CS"/>
</dbReference>
<dbReference type="InterPro" id="IPR005713">
    <property type="entry name" value="Ribosomal_uS19_euk/arc"/>
</dbReference>
<dbReference type="InterPro" id="IPR023575">
    <property type="entry name" value="Ribosomal_uS19_SF"/>
</dbReference>
<dbReference type="NCBIfam" id="NF003121">
    <property type="entry name" value="PRK04038.1"/>
    <property type="match status" value="1"/>
</dbReference>
<dbReference type="NCBIfam" id="TIGR01025">
    <property type="entry name" value="uS19_arch"/>
    <property type="match status" value="1"/>
</dbReference>
<dbReference type="PANTHER" id="PTHR11880">
    <property type="entry name" value="RIBOSOMAL PROTEIN S19P FAMILY MEMBER"/>
    <property type="match status" value="1"/>
</dbReference>
<dbReference type="PANTHER" id="PTHR11880:SF2">
    <property type="entry name" value="SMALL RIBOSOMAL SUBUNIT PROTEIN US19"/>
    <property type="match status" value="1"/>
</dbReference>
<dbReference type="Pfam" id="PF00203">
    <property type="entry name" value="Ribosomal_S19"/>
    <property type="match status" value="1"/>
</dbReference>
<dbReference type="PIRSF" id="PIRSF002144">
    <property type="entry name" value="Ribosomal_S19"/>
    <property type="match status" value="1"/>
</dbReference>
<dbReference type="PRINTS" id="PR00975">
    <property type="entry name" value="RIBOSOMALS19"/>
</dbReference>
<dbReference type="SUPFAM" id="SSF54570">
    <property type="entry name" value="Ribosomal protein S19"/>
    <property type="match status" value="1"/>
</dbReference>
<dbReference type="PROSITE" id="PS00323">
    <property type="entry name" value="RIBOSOMAL_S19"/>
    <property type="match status" value="1"/>
</dbReference>
<name>RS15_CAEEL</name>
<protein>
    <recommendedName>
        <fullName evidence="4">Small ribosomal subunit protein uS19</fullName>
    </recommendedName>
    <alternativeName>
        <fullName>40S ribosomal protein S15</fullName>
    </alternativeName>
</protein>
<feature type="initiator methionine" description="Removed" evidence="3">
    <location>
        <position position="1"/>
    </location>
</feature>
<feature type="chain" id="PRO_0000130037" description="Small ribosomal subunit protein uS19">
    <location>
        <begin position="2"/>
        <end position="151"/>
    </location>
</feature>
<feature type="modified residue" description="N-acetylalanine" evidence="3">
    <location>
        <position position="2"/>
    </location>
</feature>
<sequence>MATQDDAHLAELKKKRTFRKFMYRGVDLDQLLDMSREQFTKLLPCRMRRRLDRGLKRKHLALIAKVQKAKKAAGVLEKPATVKTHLRDMIILPELVGGVIGIYNGKVFNQTEIKPEMIGFYLGEFAISYKPVKHGRPGIGATHSSRFIPLK</sequence>
<gene>
    <name evidence="5" type="primary">rps-15</name>
    <name type="ORF">F36A2.6</name>
</gene>